<protein>
    <recommendedName>
        <fullName evidence="1">DNA-directed RNA polymerase subunit beta'</fullName>
        <shortName evidence="1">RNAP subunit beta'</shortName>
        <ecNumber evidence="1">2.7.7.6</ecNumber>
    </recommendedName>
    <alternativeName>
        <fullName evidence="1">RNA polymerase subunit beta'</fullName>
    </alternativeName>
    <alternativeName>
        <fullName evidence="1">Transcriptase subunit beta'</fullName>
    </alternativeName>
</protein>
<name>RPOC_XANOP</name>
<accession>B2SQQ2</accession>
<dbReference type="EC" id="2.7.7.6" evidence="1"/>
<dbReference type="EMBL" id="CP000967">
    <property type="protein sequence ID" value="ACD57879.1"/>
    <property type="molecule type" value="Genomic_DNA"/>
</dbReference>
<dbReference type="RefSeq" id="WP_011260033.1">
    <property type="nucleotide sequence ID" value="NC_010717.2"/>
</dbReference>
<dbReference type="PDB" id="6J9E">
    <property type="method" value="EM"/>
    <property type="resolution" value="3.41 A"/>
    <property type="chains" value="D=1-1405"/>
</dbReference>
<dbReference type="PDB" id="6J9F">
    <property type="method" value="EM"/>
    <property type="resolution" value="3.95 A"/>
    <property type="chains" value="D=1-1405"/>
</dbReference>
<dbReference type="PDBsum" id="6J9E"/>
<dbReference type="PDBsum" id="6J9F"/>
<dbReference type="EMDB" id="EMD-9785"/>
<dbReference type="EMDB" id="EMD-9786"/>
<dbReference type="SMR" id="B2SQQ2"/>
<dbReference type="KEGG" id="xop:PXO_04529"/>
<dbReference type="eggNOG" id="COG0086">
    <property type="taxonomic scope" value="Bacteria"/>
</dbReference>
<dbReference type="HOGENOM" id="CLU_000524_3_1_6"/>
<dbReference type="Proteomes" id="UP000001740">
    <property type="component" value="Chromosome"/>
</dbReference>
<dbReference type="GO" id="GO:0000428">
    <property type="term" value="C:DNA-directed RNA polymerase complex"/>
    <property type="evidence" value="ECO:0007669"/>
    <property type="project" value="UniProtKB-KW"/>
</dbReference>
<dbReference type="GO" id="GO:0003677">
    <property type="term" value="F:DNA binding"/>
    <property type="evidence" value="ECO:0007669"/>
    <property type="project" value="UniProtKB-UniRule"/>
</dbReference>
<dbReference type="GO" id="GO:0003899">
    <property type="term" value="F:DNA-directed RNA polymerase activity"/>
    <property type="evidence" value="ECO:0007669"/>
    <property type="project" value="UniProtKB-UniRule"/>
</dbReference>
<dbReference type="GO" id="GO:0000287">
    <property type="term" value="F:magnesium ion binding"/>
    <property type="evidence" value="ECO:0007669"/>
    <property type="project" value="UniProtKB-UniRule"/>
</dbReference>
<dbReference type="GO" id="GO:0008270">
    <property type="term" value="F:zinc ion binding"/>
    <property type="evidence" value="ECO:0007669"/>
    <property type="project" value="UniProtKB-UniRule"/>
</dbReference>
<dbReference type="GO" id="GO:0006351">
    <property type="term" value="P:DNA-templated transcription"/>
    <property type="evidence" value="ECO:0007669"/>
    <property type="project" value="UniProtKB-UniRule"/>
</dbReference>
<dbReference type="CDD" id="cd02655">
    <property type="entry name" value="RNAP_beta'_C"/>
    <property type="match status" value="1"/>
</dbReference>
<dbReference type="CDD" id="cd01609">
    <property type="entry name" value="RNAP_beta'_N"/>
    <property type="match status" value="1"/>
</dbReference>
<dbReference type="FunFam" id="1.10.132.30:FF:000003">
    <property type="entry name" value="DNA-directed RNA polymerase subunit beta"/>
    <property type="match status" value="1"/>
</dbReference>
<dbReference type="FunFam" id="1.10.150.390:FF:000002">
    <property type="entry name" value="DNA-directed RNA polymerase subunit beta"/>
    <property type="match status" value="1"/>
</dbReference>
<dbReference type="Gene3D" id="1.10.132.30">
    <property type="match status" value="1"/>
</dbReference>
<dbReference type="Gene3D" id="1.10.150.390">
    <property type="match status" value="1"/>
</dbReference>
<dbReference type="Gene3D" id="1.10.1790.20">
    <property type="match status" value="1"/>
</dbReference>
<dbReference type="Gene3D" id="1.10.40.90">
    <property type="match status" value="1"/>
</dbReference>
<dbReference type="Gene3D" id="2.40.40.20">
    <property type="match status" value="1"/>
</dbReference>
<dbReference type="Gene3D" id="2.40.50.100">
    <property type="match status" value="3"/>
</dbReference>
<dbReference type="Gene3D" id="4.10.860.120">
    <property type="entry name" value="RNA polymerase II, clamp domain"/>
    <property type="match status" value="1"/>
</dbReference>
<dbReference type="Gene3D" id="1.10.274.100">
    <property type="entry name" value="RNA polymerase Rpb1, domain 3"/>
    <property type="match status" value="1"/>
</dbReference>
<dbReference type="HAMAP" id="MF_01322">
    <property type="entry name" value="RNApol_bact_RpoC"/>
    <property type="match status" value="1"/>
</dbReference>
<dbReference type="InterPro" id="IPR045867">
    <property type="entry name" value="DNA-dir_RpoC_beta_prime"/>
</dbReference>
<dbReference type="InterPro" id="IPR012754">
    <property type="entry name" value="DNA-dir_RpoC_beta_prime_bact"/>
</dbReference>
<dbReference type="InterPro" id="IPR000722">
    <property type="entry name" value="RNA_pol_asu"/>
</dbReference>
<dbReference type="InterPro" id="IPR006592">
    <property type="entry name" value="RNA_pol_N"/>
</dbReference>
<dbReference type="InterPro" id="IPR007080">
    <property type="entry name" value="RNA_pol_Rpb1_1"/>
</dbReference>
<dbReference type="InterPro" id="IPR007066">
    <property type="entry name" value="RNA_pol_Rpb1_3"/>
</dbReference>
<dbReference type="InterPro" id="IPR042102">
    <property type="entry name" value="RNA_pol_Rpb1_3_sf"/>
</dbReference>
<dbReference type="InterPro" id="IPR007083">
    <property type="entry name" value="RNA_pol_Rpb1_4"/>
</dbReference>
<dbReference type="InterPro" id="IPR007081">
    <property type="entry name" value="RNA_pol_Rpb1_5"/>
</dbReference>
<dbReference type="InterPro" id="IPR044893">
    <property type="entry name" value="RNA_pol_Rpb1_clamp_domain"/>
</dbReference>
<dbReference type="InterPro" id="IPR038120">
    <property type="entry name" value="Rpb1_funnel_sf"/>
</dbReference>
<dbReference type="NCBIfam" id="TIGR02386">
    <property type="entry name" value="rpoC_TIGR"/>
    <property type="match status" value="1"/>
</dbReference>
<dbReference type="PANTHER" id="PTHR19376">
    <property type="entry name" value="DNA-DIRECTED RNA POLYMERASE"/>
    <property type="match status" value="1"/>
</dbReference>
<dbReference type="PANTHER" id="PTHR19376:SF54">
    <property type="entry name" value="DNA-DIRECTED RNA POLYMERASE SUBUNIT BETA"/>
    <property type="match status" value="1"/>
</dbReference>
<dbReference type="Pfam" id="PF04997">
    <property type="entry name" value="RNA_pol_Rpb1_1"/>
    <property type="match status" value="1"/>
</dbReference>
<dbReference type="Pfam" id="PF00623">
    <property type="entry name" value="RNA_pol_Rpb1_2"/>
    <property type="match status" value="2"/>
</dbReference>
<dbReference type="Pfam" id="PF04983">
    <property type="entry name" value="RNA_pol_Rpb1_3"/>
    <property type="match status" value="1"/>
</dbReference>
<dbReference type="Pfam" id="PF05000">
    <property type="entry name" value="RNA_pol_Rpb1_4"/>
    <property type="match status" value="1"/>
</dbReference>
<dbReference type="Pfam" id="PF04998">
    <property type="entry name" value="RNA_pol_Rpb1_5"/>
    <property type="match status" value="1"/>
</dbReference>
<dbReference type="SMART" id="SM00663">
    <property type="entry name" value="RPOLA_N"/>
    <property type="match status" value="1"/>
</dbReference>
<dbReference type="SUPFAM" id="SSF64484">
    <property type="entry name" value="beta and beta-prime subunits of DNA dependent RNA-polymerase"/>
    <property type="match status" value="1"/>
</dbReference>
<reference key="1">
    <citation type="journal article" date="2008" name="BMC Genomics">
        <title>Genome sequence and rapid evolution of the rice pathogen Xanthomonas oryzae pv. oryzae PXO99A.</title>
        <authorList>
            <person name="Salzberg S.L."/>
            <person name="Sommer D.D."/>
            <person name="Schatz M.C."/>
            <person name="Phillippy A.M."/>
            <person name="Rabinowicz P.D."/>
            <person name="Tsuge S."/>
            <person name="Furutani A."/>
            <person name="Ochiai H."/>
            <person name="Delcher A.L."/>
            <person name="Kelley D."/>
            <person name="Madupu R."/>
            <person name="Puiu D."/>
            <person name="Radune D."/>
            <person name="Shumway M."/>
            <person name="Trapnell C."/>
            <person name="Aparna G."/>
            <person name="Jha G."/>
            <person name="Pandey A."/>
            <person name="Patil P.B."/>
            <person name="Ishihara H."/>
            <person name="Meyer D.F."/>
            <person name="Szurek B."/>
            <person name="Verdier V."/>
            <person name="Koebnik R."/>
            <person name="Dow J.M."/>
            <person name="Ryan R.P."/>
            <person name="Hirata H."/>
            <person name="Tsuyumu S."/>
            <person name="Won Lee S."/>
            <person name="Seo Y.-S."/>
            <person name="Sriariyanum M."/>
            <person name="Ronald P.C."/>
            <person name="Sonti R.V."/>
            <person name="Van Sluys M.-A."/>
            <person name="Leach J.E."/>
            <person name="White F.F."/>
            <person name="Bogdanove A.J."/>
        </authorList>
    </citation>
    <scope>NUCLEOTIDE SEQUENCE [LARGE SCALE GENOMIC DNA]</scope>
    <source>
        <strain>PXO99A</strain>
    </source>
</reference>
<feature type="chain" id="PRO_0000353459" description="DNA-directed RNA polymerase subunit beta'">
    <location>
        <begin position="1"/>
        <end position="1405"/>
    </location>
</feature>
<feature type="region of interest" description="Disordered" evidence="2">
    <location>
        <begin position="1375"/>
        <end position="1405"/>
    </location>
</feature>
<feature type="binding site" evidence="1">
    <location>
        <position position="70"/>
    </location>
    <ligand>
        <name>Zn(2+)</name>
        <dbReference type="ChEBI" id="CHEBI:29105"/>
        <label>1</label>
    </ligand>
</feature>
<feature type="binding site" evidence="1">
    <location>
        <position position="72"/>
    </location>
    <ligand>
        <name>Zn(2+)</name>
        <dbReference type="ChEBI" id="CHEBI:29105"/>
        <label>1</label>
    </ligand>
</feature>
<feature type="binding site" evidence="1">
    <location>
        <position position="85"/>
    </location>
    <ligand>
        <name>Zn(2+)</name>
        <dbReference type="ChEBI" id="CHEBI:29105"/>
        <label>1</label>
    </ligand>
</feature>
<feature type="binding site" evidence="1">
    <location>
        <position position="88"/>
    </location>
    <ligand>
        <name>Zn(2+)</name>
        <dbReference type="ChEBI" id="CHEBI:29105"/>
        <label>1</label>
    </ligand>
</feature>
<feature type="binding site" evidence="1">
    <location>
        <position position="460"/>
    </location>
    <ligand>
        <name>Mg(2+)</name>
        <dbReference type="ChEBI" id="CHEBI:18420"/>
    </ligand>
</feature>
<feature type="binding site" evidence="1">
    <location>
        <position position="462"/>
    </location>
    <ligand>
        <name>Mg(2+)</name>
        <dbReference type="ChEBI" id="CHEBI:18420"/>
    </ligand>
</feature>
<feature type="binding site" evidence="1">
    <location>
        <position position="464"/>
    </location>
    <ligand>
        <name>Mg(2+)</name>
        <dbReference type="ChEBI" id="CHEBI:18420"/>
    </ligand>
</feature>
<feature type="binding site" evidence="1">
    <location>
        <position position="815"/>
    </location>
    <ligand>
        <name>Zn(2+)</name>
        <dbReference type="ChEBI" id="CHEBI:29105"/>
        <label>2</label>
    </ligand>
</feature>
<feature type="binding site" evidence="1">
    <location>
        <position position="890"/>
    </location>
    <ligand>
        <name>Zn(2+)</name>
        <dbReference type="ChEBI" id="CHEBI:29105"/>
        <label>2</label>
    </ligand>
</feature>
<feature type="binding site" evidence="1">
    <location>
        <position position="897"/>
    </location>
    <ligand>
        <name>Zn(2+)</name>
        <dbReference type="ChEBI" id="CHEBI:29105"/>
        <label>2</label>
    </ligand>
</feature>
<feature type="binding site" evidence="1">
    <location>
        <position position="900"/>
    </location>
    <ligand>
        <name>Zn(2+)</name>
        <dbReference type="ChEBI" id="CHEBI:29105"/>
        <label>2</label>
    </ligand>
</feature>
<feature type="helix" evidence="3">
    <location>
        <begin position="6"/>
        <end position="8"/>
    </location>
</feature>
<feature type="strand" evidence="3">
    <location>
        <begin position="20"/>
        <end position="24"/>
    </location>
</feature>
<feature type="helix" evidence="3">
    <location>
        <begin position="27"/>
        <end position="33"/>
    </location>
</feature>
<feature type="strand" evidence="3">
    <location>
        <begin position="55"/>
        <end position="57"/>
    </location>
</feature>
<feature type="turn" evidence="3">
    <location>
        <begin position="59"/>
        <end position="62"/>
    </location>
</feature>
<feature type="strand" evidence="3">
    <location>
        <begin position="86"/>
        <end position="88"/>
    </location>
</feature>
<feature type="helix" evidence="3">
    <location>
        <begin position="95"/>
        <end position="98"/>
    </location>
</feature>
<feature type="strand" evidence="3">
    <location>
        <begin position="104"/>
        <end position="112"/>
    </location>
</feature>
<feature type="turn" evidence="3">
    <location>
        <begin position="114"/>
        <end position="117"/>
    </location>
</feature>
<feature type="strand" evidence="3">
    <location>
        <begin position="118"/>
        <end position="121"/>
    </location>
</feature>
<feature type="helix" evidence="3">
    <location>
        <begin position="123"/>
        <end position="127"/>
    </location>
</feature>
<feature type="helix" evidence="3">
    <location>
        <begin position="132"/>
        <end position="139"/>
    </location>
</feature>
<feature type="strand" evidence="3">
    <location>
        <begin position="142"/>
        <end position="146"/>
    </location>
</feature>
<feature type="helix" evidence="3">
    <location>
        <begin position="162"/>
        <end position="172"/>
    </location>
</feature>
<feature type="helix" evidence="3">
    <location>
        <begin position="182"/>
        <end position="190"/>
    </location>
</feature>
<feature type="helix" evidence="3">
    <location>
        <begin position="196"/>
        <end position="205"/>
    </location>
</feature>
<feature type="helix" evidence="3">
    <location>
        <begin position="212"/>
        <end position="229"/>
    </location>
</feature>
<feature type="helix" evidence="3">
    <location>
        <begin position="234"/>
        <end position="236"/>
    </location>
</feature>
<feature type="strand" evidence="3">
    <location>
        <begin position="237"/>
        <end position="243"/>
    </location>
</feature>
<feature type="turn" evidence="3">
    <location>
        <begin position="247"/>
        <end position="249"/>
    </location>
</feature>
<feature type="helix" evidence="3">
    <location>
        <begin position="265"/>
        <end position="284"/>
    </location>
</feature>
<feature type="helix" evidence="3">
    <location>
        <begin position="289"/>
        <end position="307"/>
    </location>
</feature>
<feature type="strand" evidence="3">
    <location>
        <begin position="311"/>
        <end position="313"/>
    </location>
</feature>
<feature type="turn" evidence="3">
    <location>
        <begin position="327"/>
        <end position="331"/>
    </location>
</feature>
<feature type="strand" evidence="3">
    <location>
        <begin position="332"/>
        <end position="336"/>
    </location>
</feature>
<feature type="helix" evidence="3">
    <location>
        <begin position="339"/>
        <end position="343"/>
    </location>
</feature>
<feature type="strand" evidence="3">
    <location>
        <begin position="344"/>
        <end position="357"/>
    </location>
</feature>
<feature type="strand" evidence="3">
    <location>
        <begin position="359"/>
        <end position="361"/>
    </location>
</feature>
<feature type="strand" evidence="3">
    <location>
        <begin position="363"/>
        <end position="369"/>
    </location>
</feature>
<feature type="helix" evidence="3">
    <location>
        <begin position="370"/>
        <end position="376"/>
    </location>
</feature>
<feature type="helix" evidence="3">
    <location>
        <begin position="378"/>
        <end position="388"/>
    </location>
</feature>
<feature type="helix" evidence="3">
    <location>
        <begin position="394"/>
        <end position="403"/>
    </location>
</feature>
<feature type="helix" evidence="3">
    <location>
        <begin position="406"/>
        <end position="415"/>
    </location>
</feature>
<feature type="helix" evidence="3">
    <location>
        <begin position="416"/>
        <end position="418"/>
    </location>
</feature>
<feature type="strand" evidence="3">
    <location>
        <begin position="421"/>
        <end position="427"/>
    </location>
</feature>
<feature type="helix" evidence="3">
    <location>
        <begin position="431"/>
        <end position="433"/>
    </location>
</feature>
<feature type="strand" evidence="3">
    <location>
        <begin position="434"/>
        <end position="449"/>
    </location>
</feature>
<feature type="turn" evidence="3">
    <location>
        <begin position="451"/>
        <end position="453"/>
    </location>
</feature>
<feature type="helix" evidence="3">
    <location>
        <begin position="454"/>
        <end position="457"/>
    </location>
</feature>
<feature type="strand" evidence="3">
    <location>
        <begin position="461"/>
        <end position="463"/>
    </location>
</feature>
<feature type="strand" evidence="3">
    <location>
        <begin position="465"/>
        <end position="469"/>
    </location>
</feature>
<feature type="helix" evidence="3">
    <location>
        <begin position="474"/>
        <end position="483"/>
    </location>
</feature>
<feature type="turn" evidence="3">
    <location>
        <begin position="486"/>
        <end position="488"/>
    </location>
</feature>
<feature type="strand" evidence="3">
    <location>
        <begin position="493"/>
        <end position="499"/>
    </location>
</feature>
<feature type="helix" evidence="3">
    <location>
        <begin position="504"/>
        <end position="514"/>
    </location>
</feature>
<feature type="helix" evidence="3">
    <location>
        <begin position="530"/>
        <end position="538"/>
    </location>
</feature>
<feature type="strand" evidence="3">
    <location>
        <begin position="547"/>
        <end position="556"/>
    </location>
</feature>
<feature type="strand" evidence="3">
    <location>
        <begin position="565"/>
        <end position="574"/>
    </location>
</feature>
<feature type="helix" evidence="3">
    <location>
        <begin position="575"/>
        <end position="580"/>
    </location>
</feature>
<feature type="turn" evidence="3">
    <location>
        <begin position="581"/>
        <end position="583"/>
    </location>
</feature>
<feature type="strand" evidence="3">
    <location>
        <begin position="586"/>
        <end position="588"/>
    </location>
</feature>
<feature type="strand" evidence="3">
    <location>
        <begin position="592"/>
        <end position="595"/>
    </location>
</feature>
<feature type="helix" evidence="3">
    <location>
        <begin position="599"/>
        <end position="612"/>
    </location>
</feature>
<feature type="helix" evidence="3">
    <location>
        <begin position="616"/>
        <end position="634"/>
    </location>
</feature>
<feature type="turn" evidence="3">
    <location>
        <begin position="635"/>
        <end position="637"/>
    </location>
</feature>
<feature type="strand" evidence="3">
    <location>
        <begin position="642"/>
        <end position="645"/>
    </location>
</feature>
<feature type="helix" evidence="3">
    <location>
        <begin position="649"/>
        <end position="670"/>
    </location>
</feature>
<feature type="helix" evidence="3">
    <location>
        <begin position="676"/>
        <end position="703"/>
    </location>
</feature>
<feature type="strand" evidence="3">
    <location>
        <begin position="707"/>
        <end position="710"/>
    </location>
</feature>
<feature type="strand" evidence="3">
    <location>
        <begin position="713"/>
        <end position="716"/>
    </location>
</feature>
<feature type="helix" evidence="3">
    <location>
        <begin position="722"/>
        <end position="729"/>
    </location>
</feature>
<feature type="strand" evidence="3">
    <location>
        <begin position="730"/>
        <end position="732"/>
    </location>
</feature>
<feature type="helix" evidence="3">
    <location>
        <begin position="735"/>
        <end position="738"/>
    </location>
</feature>
<feature type="turn" evidence="3">
    <location>
        <begin position="739"/>
        <end position="741"/>
    </location>
</feature>
<feature type="strand" evidence="3">
    <location>
        <begin position="764"/>
        <end position="766"/>
    </location>
</feature>
<feature type="helix" evidence="3">
    <location>
        <begin position="770"/>
        <end position="804"/>
    </location>
</feature>
<feature type="strand" evidence="3">
    <location>
        <begin position="821"/>
        <end position="823"/>
    </location>
</feature>
<feature type="strand" evidence="3">
    <location>
        <begin position="829"/>
        <end position="834"/>
    </location>
</feature>
<feature type="helix" evidence="3">
    <location>
        <begin position="836"/>
        <end position="839"/>
    </location>
</feature>
<feature type="strand" evidence="3">
    <location>
        <begin position="843"/>
        <end position="847"/>
    </location>
</feature>
<feature type="helix" evidence="3">
    <location>
        <begin position="868"/>
        <end position="877"/>
    </location>
</feature>
<feature type="strand" evidence="3">
    <location>
        <begin position="882"/>
        <end position="884"/>
    </location>
</feature>
<feature type="strand" evidence="3">
    <location>
        <begin position="887"/>
        <end position="889"/>
    </location>
</feature>
<feature type="strand" evidence="3">
    <location>
        <begin position="893"/>
        <end position="896"/>
    </location>
</feature>
<feature type="helix" evidence="3">
    <location>
        <begin position="898"/>
        <end position="901"/>
    </location>
</feature>
<feature type="strand" evidence="3">
    <location>
        <begin position="905"/>
        <end position="910"/>
    </location>
</feature>
<feature type="helix" evidence="3">
    <location>
        <begin position="919"/>
        <end position="925"/>
    </location>
</feature>
<feature type="helix" evidence="3">
    <location>
        <begin position="928"/>
        <end position="930"/>
    </location>
</feature>
<feature type="strand" evidence="3">
    <location>
        <begin position="980"/>
        <end position="987"/>
    </location>
</feature>
<feature type="strand" evidence="3">
    <location>
        <begin position="989"/>
        <end position="991"/>
    </location>
</feature>
<feature type="strand" evidence="3">
    <location>
        <begin position="996"/>
        <end position="999"/>
    </location>
</feature>
<feature type="strand" evidence="3">
    <location>
        <begin position="1018"/>
        <end position="1020"/>
    </location>
</feature>
<feature type="helix" evidence="3">
    <location>
        <begin position="1140"/>
        <end position="1148"/>
    </location>
</feature>
<feature type="strand" evidence="3">
    <location>
        <begin position="1153"/>
        <end position="1155"/>
    </location>
</feature>
<feature type="strand" evidence="3">
    <location>
        <begin position="1163"/>
        <end position="1165"/>
    </location>
</feature>
<feature type="strand" evidence="3">
    <location>
        <begin position="1172"/>
        <end position="1180"/>
    </location>
</feature>
<feature type="strand" evidence="3">
    <location>
        <begin position="1182"/>
        <end position="1184"/>
    </location>
</feature>
<feature type="strand" evidence="3">
    <location>
        <begin position="1187"/>
        <end position="1192"/>
    </location>
</feature>
<feature type="strand" evidence="3">
    <location>
        <begin position="1210"/>
        <end position="1212"/>
    </location>
</feature>
<feature type="helix" evidence="3">
    <location>
        <begin position="1218"/>
        <end position="1224"/>
    </location>
</feature>
<feature type="helix" evidence="3">
    <location>
        <begin position="1228"/>
        <end position="1245"/>
    </location>
</feature>
<feature type="helix" evidence="3">
    <location>
        <begin position="1251"/>
        <end position="1261"/>
    </location>
</feature>
<feature type="strand" evidence="3">
    <location>
        <begin position="1264"/>
        <end position="1269"/>
    </location>
</feature>
<feature type="strand" evidence="3">
    <location>
        <begin position="1271"/>
        <end position="1273"/>
    </location>
</feature>
<feature type="strand" evidence="3">
    <location>
        <begin position="1278"/>
        <end position="1280"/>
    </location>
</feature>
<feature type="helix" evidence="3">
    <location>
        <begin position="1281"/>
        <end position="1293"/>
    </location>
</feature>
<feature type="strand" evidence="3">
    <location>
        <begin position="1303"/>
        <end position="1305"/>
    </location>
</feature>
<feature type="helix" evidence="3">
    <location>
        <begin position="1310"/>
        <end position="1313"/>
    </location>
</feature>
<feature type="helix" evidence="3">
    <location>
        <begin position="1320"/>
        <end position="1323"/>
    </location>
</feature>
<feature type="strand" evidence="3">
    <location>
        <begin position="1325"/>
        <end position="1327"/>
    </location>
</feature>
<feature type="helix" evidence="3">
    <location>
        <begin position="1329"/>
        <end position="1339"/>
    </location>
</feature>
<feature type="helix" evidence="3">
    <location>
        <begin position="1349"/>
        <end position="1354"/>
    </location>
</feature>
<feature type="strand" evidence="3">
    <location>
        <begin position="1359"/>
        <end position="1361"/>
    </location>
</feature>
<feature type="helix" evidence="3">
    <location>
        <begin position="1364"/>
        <end position="1370"/>
    </location>
</feature>
<gene>
    <name evidence="1" type="primary">rpoC</name>
    <name type="ordered locus">PXO_04529</name>
</gene>
<evidence type="ECO:0000255" key="1">
    <source>
        <dbReference type="HAMAP-Rule" id="MF_01322"/>
    </source>
</evidence>
<evidence type="ECO:0000256" key="2">
    <source>
        <dbReference type="SAM" id="MobiDB-lite"/>
    </source>
</evidence>
<evidence type="ECO:0007829" key="3">
    <source>
        <dbReference type="PDB" id="6J9E"/>
    </source>
</evidence>
<proteinExistence type="evidence at protein level"/>
<keyword id="KW-0002">3D-structure</keyword>
<keyword id="KW-0240">DNA-directed RNA polymerase</keyword>
<keyword id="KW-0460">Magnesium</keyword>
<keyword id="KW-0479">Metal-binding</keyword>
<keyword id="KW-0548">Nucleotidyltransferase</keyword>
<keyword id="KW-0804">Transcription</keyword>
<keyword id="KW-0808">Transferase</keyword>
<keyword id="KW-0862">Zinc</keyword>
<comment type="function">
    <text evidence="1">DNA-dependent RNA polymerase catalyzes the transcription of DNA into RNA using the four ribonucleoside triphosphates as substrates.</text>
</comment>
<comment type="catalytic activity">
    <reaction evidence="1">
        <text>RNA(n) + a ribonucleoside 5'-triphosphate = RNA(n+1) + diphosphate</text>
        <dbReference type="Rhea" id="RHEA:21248"/>
        <dbReference type="Rhea" id="RHEA-COMP:14527"/>
        <dbReference type="Rhea" id="RHEA-COMP:17342"/>
        <dbReference type="ChEBI" id="CHEBI:33019"/>
        <dbReference type="ChEBI" id="CHEBI:61557"/>
        <dbReference type="ChEBI" id="CHEBI:140395"/>
        <dbReference type="EC" id="2.7.7.6"/>
    </reaction>
</comment>
<comment type="cofactor">
    <cofactor evidence="1">
        <name>Mg(2+)</name>
        <dbReference type="ChEBI" id="CHEBI:18420"/>
    </cofactor>
    <text evidence="1">Binds 1 Mg(2+) ion per subunit.</text>
</comment>
<comment type="cofactor">
    <cofactor evidence="1">
        <name>Zn(2+)</name>
        <dbReference type="ChEBI" id="CHEBI:29105"/>
    </cofactor>
    <text evidence="1">Binds 2 Zn(2+) ions per subunit.</text>
</comment>
<comment type="subunit">
    <text evidence="1">The RNAP catalytic core consists of 2 alpha, 1 beta, 1 beta' and 1 omega subunit. When a sigma factor is associated with the core the holoenzyme is formed, which can initiate transcription.</text>
</comment>
<comment type="similarity">
    <text evidence="1">Belongs to the RNA polymerase beta' chain family.</text>
</comment>
<organism>
    <name type="scientific">Xanthomonas oryzae pv. oryzae (strain PXO99A)</name>
    <dbReference type="NCBI Taxonomy" id="360094"/>
    <lineage>
        <taxon>Bacteria</taxon>
        <taxon>Pseudomonadati</taxon>
        <taxon>Pseudomonadota</taxon>
        <taxon>Gammaproteobacteria</taxon>
        <taxon>Lysobacterales</taxon>
        <taxon>Lysobacteraceae</taxon>
        <taxon>Xanthomonas</taxon>
    </lineage>
</organism>
<sequence length="1405" mass="155232">MKDLLNLFNQQRQTLDFDAIKIALASPDLIRSWSYGEVKKPETINYRTFKPERDGLFCAAIFGPIKDYECLCGKYKRMKHRGVVCEKCGTEVTLAKVRRERMGHIDLASPVAHIWFLKSLPSRIGLMLDMTLRDIERVLYFEAYVVTEPGLTPLERRQLLTEEQYLTARQEYNDDFDAAMGAEAVYELLRTIDLQSEMTRLREEIASTGSETKLKRLTKRIKLIEAFLESGNRPEWMVMTVLPVLPPDLRPLVPLDGGRFATSDLNDLYRRVINRNNRLRRLLELNAPDIIVRNEKRMLQESVDALLDNGRRGRAITGTNKRPLKSLADMIKGKQGRFRQNLLGKRVDYSGRSVITVGPYLKLHQCGLPKKMALELFKPFVFAKLQRRGLATTIKAAKKLVEREEAEVWDILEEVIREHPVLLNRAPTLHRLGIQAFEPVLIEGKAIQLHPLVCTAFNADFDGDQMAVHVPLSLEAQLEARALMMSTNNILSPANGEPIIVPSQDVVLGLYYMSRALENKKGEGMVFANTSEVKRAYDNRVVELHAKVKVRITQVDVDAVDGKRTSGTSIVDTTVGRALLSEILPEGLPFQLANTEMTKKNISRLINSSYRLLGLKDTVVFADKLMYTGYAYATRAGVSIGIDDMLIPDEKKGILTEAEAEVLEIQEQYQSGLVTAGERYNKVVDIWSRTSERIAKAMMDTIGTEKVENAKGETIDQKSMNSLYIMADSGARGSQAQIRQLAGMRGLMARPDGSIIETPIKANFREGLNVQEYFNSTHGARKGLADTALKTANSGYLTRRLVDVAQDVVITEIDCGTTEGLIMTPIVEGGDVVEPLKERVLGRVVAEDVYLPGNDEEPIVTRNTLLDEAWVAKLEDASVQSVKVRSTISCESSFGVCARCYGRDLARGHQVNIGEAVGVIAAQSIGEPGTQLTMRTFHIGGAASRAAAVDNITVKTTGSVKFNNLKSVAHASGSLVAVSRSGELSVLDGHGRERERYKLPYGATITAKDGDAVKAGQSVANWDPHNHPIVSEVAGFIRFIDFVDGVTVIEKTDELTGLASREITDPKRRGAHAKELRPIVRIVDGKGNDLTIPNTDLPAQYLLPPRSIVNLQDGAAVGVGDVVAKIPQEASKTRDITGGLPRVADLFEARKPKDPAILAERSGIISFGKDTKGKQRLIIKDTDGSEHEELIPKYRQIIVFEGEHVTKGETVVDGEPSPQDILRLLGVEPLAAYLVKEIQDVYRLQGVKINDKHIEVITRQMLRKVEIVDQGNSKFLNGEQVERQRVIEENARLVKRNELPAKYDPVLLGITKASLATESFISAASFQETTRVLTEAAVRGTRDNLRGLKENVIVGRLIPAGTGLAYHAGRRKASGLTDSEMETLSGKPAGAEPVAALADAGADEE</sequence>